<reference key="1">
    <citation type="journal article" date="1984" name="Virus Res.">
        <title>The molecular biology of rotaviruses. VII. Detailed structural analysis of gene 10 of bovine rotavirus.</title>
        <authorList>
            <person name="Baybutt H.N."/>
            <person name="McCrae M.A."/>
        </authorList>
    </citation>
    <scope>NUCLEOTIDE SEQUENCE [GENOMIC RNA]</scope>
</reference>
<reference key="2">
    <citation type="journal article" date="1985" name="Virology">
        <title>Structural homologies between RNA gene segments 10 and 11 from UK bovine, simian SA11, and human Wa rotaviruses.</title>
        <authorList>
            <person name="Ward C.W."/>
            <person name="Azad A.A."/>
            <person name="Dyall-Smith M.L."/>
        </authorList>
    </citation>
    <scope>NUCLEOTIDE SEQUENCE [GENOMIC RNA]</scope>
</reference>
<reference key="3">
    <citation type="journal article" date="2006" name="J. Virol.">
        <title>Rotavirus nonstructural glycoprotein NSP4 is secreted from the apical surfaces of polarized epithelial cells.</title>
        <authorList>
            <person name="Bugarcic A."/>
            <person name="Taylor J.A."/>
        </authorList>
    </citation>
    <scope>SUBCELLULAR LOCATION</scope>
    <scope>GLYCOSYLATION</scope>
</reference>
<dbReference type="EMBL" id="M21885">
    <property type="protein sequence ID" value="AAA47313.1"/>
    <property type="molecule type" value="Genomic_RNA"/>
</dbReference>
<dbReference type="EMBL" id="K03384">
    <property type="protein sequence ID" value="AAA47288.1"/>
    <property type="molecule type" value="Genomic_RNA"/>
</dbReference>
<dbReference type="PIR" id="A04141">
    <property type="entry name" value="VGXRBR"/>
</dbReference>
<dbReference type="iPTMnet" id="P04513"/>
<dbReference type="Proteomes" id="UP000008657">
    <property type="component" value="Genome"/>
</dbReference>
<dbReference type="GO" id="GO:0005576">
    <property type="term" value="C:extracellular region"/>
    <property type="evidence" value="ECO:0007669"/>
    <property type="project" value="UniProtKB-SubCell"/>
</dbReference>
<dbReference type="GO" id="GO:0044155">
    <property type="term" value="C:host caveola"/>
    <property type="evidence" value="ECO:0007669"/>
    <property type="project" value="UniProtKB-SubCell"/>
</dbReference>
<dbReference type="GO" id="GO:0044169">
    <property type="term" value="C:host cell rough endoplasmic reticulum membrane"/>
    <property type="evidence" value="ECO:0007669"/>
    <property type="project" value="UniProtKB-SubCell"/>
</dbReference>
<dbReference type="GO" id="GO:0016020">
    <property type="term" value="C:membrane"/>
    <property type="evidence" value="ECO:0007669"/>
    <property type="project" value="UniProtKB-UniRule"/>
</dbReference>
<dbReference type="GO" id="GO:0015267">
    <property type="term" value="F:channel activity"/>
    <property type="evidence" value="ECO:0007669"/>
    <property type="project" value="UniProtKB-KW"/>
</dbReference>
<dbReference type="GO" id="GO:0046872">
    <property type="term" value="F:metal ion binding"/>
    <property type="evidence" value="ECO:0007669"/>
    <property type="project" value="UniProtKB-UniRule"/>
</dbReference>
<dbReference type="GO" id="GO:0090729">
    <property type="term" value="F:toxin activity"/>
    <property type="evidence" value="ECO:0007669"/>
    <property type="project" value="UniProtKB-UniRule"/>
</dbReference>
<dbReference type="GO" id="GO:0034220">
    <property type="term" value="P:monoatomic ion transmembrane transport"/>
    <property type="evidence" value="ECO:0007669"/>
    <property type="project" value="UniProtKB-KW"/>
</dbReference>
<dbReference type="GO" id="GO:0039520">
    <property type="term" value="P:symbiont-mediated activation of host autophagy"/>
    <property type="evidence" value="ECO:0007669"/>
    <property type="project" value="UniProtKB-KW"/>
</dbReference>
<dbReference type="GO" id="GO:0016032">
    <property type="term" value="P:viral process"/>
    <property type="evidence" value="ECO:0007669"/>
    <property type="project" value="UniProtKB-UniRule"/>
</dbReference>
<dbReference type="Gene3D" id="1.20.5.430">
    <property type="match status" value="1"/>
</dbReference>
<dbReference type="HAMAP" id="MF_04091">
    <property type="entry name" value="ROTA_NSP4"/>
    <property type="match status" value="1"/>
</dbReference>
<dbReference type="InterPro" id="IPR002107">
    <property type="entry name" value="Rotavirus_NSP4"/>
</dbReference>
<dbReference type="Pfam" id="PF01452">
    <property type="entry name" value="Rota_NSP4"/>
    <property type="match status" value="1"/>
</dbReference>
<dbReference type="SUPFAM" id="SSF58030">
    <property type="entry name" value="Rotavirus nonstructural proteins"/>
    <property type="match status" value="1"/>
</dbReference>
<organism>
    <name type="scientific">Rotavirus A (strain RVA/Cow/United Kingdom/UK/1975/G6P7[5])</name>
    <name type="common">RV-A</name>
    <dbReference type="NCBI Taxonomy" id="10934"/>
    <lineage>
        <taxon>Viruses</taxon>
        <taxon>Riboviria</taxon>
        <taxon>Orthornavirae</taxon>
        <taxon>Duplornaviricota</taxon>
        <taxon>Resentoviricetes</taxon>
        <taxon>Reovirales</taxon>
        <taxon>Sedoreoviridae</taxon>
        <taxon>Rotavirus</taxon>
        <taxon>Rotavirus A</taxon>
    </lineage>
</organism>
<feature type="chain" id="PRO_0000149623" description="Non-structural glycoprotein 4">
    <location>
        <begin position="1"/>
        <end position="175"/>
    </location>
</feature>
<feature type="topological domain" description="Lumenal" evidence="1">
    <location>
        <begin position="1"/>
        <end position="28"/>
    </location>
</feature>
<feature type="transmembrane region" description="Helical; Signal-anchor for type III membrane protein" evidence="1">
    <location>
        <begin position="29"/>
        <end position="51"/>
    </location>
</feature>
<feature type="topological domain" description="Cytoplasmic" evidence="1">
    <location>
        <begin position="52"/>
        <end position="175"/>
    </location>
</feature>
<feature type="binding site" evidence="1">
    <location>
        <position position="120"/>
    </location>
    <ligand>
        <name>Ca(2+)</name>
        <dbReference type="ChEBI" id="CHEBI:29108"/>
    </ligand>
</feature>
<feature type="binding site" evidence="1">
    <location>
        <position position="123"/>
    </location>
    <ligand>
        <name>Ca(2+)</name>
        <dbReference type="ChEBI" id="CHEBI:29108"/>
    </ligand>
</feature>
<feature type="glycosylation site" description="N-linked (GlcNAc...) asparagine; by host" evidence="1 2">
    <location>
        <position position="8"/>
    </location>
</feature>
<feature type="glycosylation site" description="N-linked (GlcNAc...) asparagine; by host" evidence="1 2">
    <location>
        <position position="18"/>
    </location>
</feature>
<feature type="sequence conflict" description="In Ref. 2; AAA47288." ref="2">
    <original>S</original>
    <variation>N</variation>
    <location>
        <position position="19"/>
    </location>
</feature>
<feature type="sequence conflict" description="In Ref. 2; AAA47288." ref="2">
    <original>V</original>
    <variation>A</variation>
    <location>
        <position position="37"/>
    </location>
</feature>
<feature type="sequence conflict" description="In Ref. 2; AAA47288." ref="2">
    <original>H</original>
    <variation>Y</variation>
    <location>
        <position position="131"/>
    </location>
</feature>
<feature type="sequence conflict" description="In Ref. 2; AAA47288." ref="2">
    <original>IRTVD</original>
    <variation>VRSTG</variation>
    <location>
        <begin position="136"/>
        <end position="140"/>
    </location>
</feature>
<feature type="sequence conflict" description="In Ref. 2; AAA47288." ref="2">
    <original>NGR</original>
    <variation>SGK</variation>
    <location>
        <begin position="161"/>
        <end position="163"/>
    </location>
</feature>
<sequence length="175" mass="20492">MEKLTDLNYTLSVITLMNSTLHTILEDPGMAYFPYIVSVLTVLFTLHKASIPTMKIALKTSKCSYKVVKYCIVTIFNTLLKLAGYKEQITTKDEIEKQMDRVVKEMRRQLEMIDKLTTREIEQVELLKRIHDKLMIRTVDEIDMTKEINQKNVRTLEEWENGRNPYEPKEVTAAM</sequence>
<evidence type="ECO:0000255" key="1">
    <source>
        <dbReference type="HAMAP-Rule" id="MF_04091"/>
    </source>
</evidence>
<evidence type="ECO:0000269" key="2">
    <source>
    </source>
</evidence>
<organismHost>
    <name type="scientific">Bos taurus</name>
    <name type="common">Bovine</name>
    <dbReference type="NCBI Taxonomy" id="9913"/>
</organismHost>
<keyword id="KW-1072">Activation of host autophagy by virus</keyword>
<keyword id="KW-0106">Calcium</keyword>
<keyword id="KW-0260">Enterotoxin</keyword>
<keyword id="KW-0325">Glycoprotein</keyword>
<keyword id="KW-1038">Host endoplasmic reticulum</keyword>
<keyword id="KW-1043">Host membrane</keyword>
<keyword id="KW-0945">Host-virus interaction</keyword>
<keyword id="KW-0407">Ion channel</keyword>
<keyword id="KW-0406">Ion transport</keyword>
<keyword id="KW-0472">Membrane</keyword>
<keyword id="KW-0479">Metal-binding</keyword>
<keyword id="KW-0964">Secreted</keyword>
<keyword id="KW-0735">Signal-anchor</keyword>
<keyword id="KW-0800">Toxin</keyword>
<keyword id="KW-0812">Transmembrane</keyword>
<keyword id="KW-1133">Transmembrane helix</keyword>
<keyword id="KW-0813">Transport</keyword>
<keyword id="KW-1182">Viral ion channel</keyword>
<keyword id="KW-0843">Virulence</keyword>
<proteinExistence type="evidence at protein level"/>
<protein>
    <recommendedName>
        <fullName evidence="1">Non-structural glycoprotein 4</fullName>
        <shortName evidence="1">NSP4</shortName>
    </recommendedName>
    <alternativeName>
        <fullName evidence="1">NCVP5</fullName>
    </alternativeName>
    <alternativeName>
        <fullName evidence="1">NS28</fullName>
    </alternativeName>
</protein>
<accession>P04513</accession>
<accession>P12477</accession>
<comment type="function">
    <text evidence="1">Plays an essential role in the virus replication cycle by acting as a viroporin. Creates a pore in the host endoplasmic reticulum and as a consequence releases Ca(2+) in the cytoplasm of infected cell. In turn, high levels of cytoplasmic calcium trigger membrane trafficking and transport of viral ER-associated proteins to viroplasms, sites of viral genome replication and immature particle assembly.</text>
</comment>
<comment type="function">
    <text evidence="1">The secreted form acts as an enterotoxin that causes phospholipase C-dependent elevation of the intracellular calcium concentration in host intestinal mucosa cells. Increased concentration of intracellular calcium disrupts the cytoskeleton and the tight junctions, raising the paracellular permeability. Potentiates chloride ion secretion through a calcium ion-dependent signaling pathway, inducing age-dependent diarrhea. To perform this enterotoxigenic role in vivo, NSP4 is released from infected enterocytes in a soluble form capable of diffusing within the intestinal lumen and interacting with host plasma membrane receptors on neighboring epithelial cells such as integrins ITGA1/ITGB1 and ITGA2/ITGB1.</text>
</comment>
<comment type="subunit">
    <text evidence="1">Homotetramer. Interacts with the immature particle in the viroplasm. Interacts with host CAV1, early and late in infection. Interacts with host integrin ITGA1/ITGB1 heterodimer. Interacts with host integrin ITGA2/ITGB1 heterodimer. Interaction with microtubules blocks trafficking to the Golgi apparatus.</text>
</comment>
<comment type="subcellular location">
    <subcellularLocation>
        <location evidence="1">Host rough endoplasmic reticulum membrane</location>
        <topology evidence="1">Single-pass type III membrane protein</topology>
    </subcellularLocation>
    <subcellularLocation>
        <location evidence="1">Host membrane</location>
        <location evidence="1">Host caveola</location>
        <topology evidence="1">Single-pass type III membrane protein</topology>
    </subcellularLocation>
    <subcellularLocation>
        <location evidence="1">Secreted</location>
    </subcellularLocation>
    <text evidence="1">NSP4 also localizes in vesicular structures which contain autophagosomal markers and associate with viroplasms in virus-infected cells. Additionally, a soluble form of glycosylated NSP4 is secreted despite retention of its transmembrane domain.</text>
</comment>
<comment type="domain">
    <text>A disordered 28 aa C-terminal domain is presented to the cytoplasm by each subunit of the tetrameric receptor.</text>
</comment>
<comment type="domain">
    <text evidence="1">Binds 1 calcium ion per tetramer.</text>
</comment>
<comment type="PTM">
    <text>Mannosylated.</text>
</comment>
<comment type="PTM">
    <text evidence="1">The N-glycosyl content is primarily Man(9)GlcNAc, with a small amount of Man(8)GlcNAc.</text>
</comment>
<comment type="similarity">
    <text evidence="1">Belongs to the rotavirus NSP4 family.</text>
</comment>
<name>NSP4_ROTBU</name>